<reference key="1">
    <citation type="journal article" date="1997" name="Nature">
        <title>The nucleotide sequence of Saccharomyces cerevisiae chromosome XVI.</title>
        <authorList>
            <person name="Bussey H."/>
            <person name="Storms R.K."/>
            <person name="Ahmed A."/>
            <person name="Albermann K."/>
            <person name="Allen E."/>
            <person name="Ansorge W."/>
            <person name="Araujo R."/>
            <person name="Aparicio A."/>
            <person name="Barrell B.G."/>
            <person name="Badcock K."/>
            <person name="Benes V."/>
            <person name="Botstein D."/>
            <person name="Bowman S."/>
            <person name="Brueckner M."/>
            <person name="Carpenter J."/>
            <person name="Cherry J.M."/>
            <person name="Chung E."/>
            <person name="Churcher C.M."/>
            <person name="Coster F."/>
            <person name="Davis K."/>
            <person name="Davis R.W."/>
            <person name="Dietrich F.S."/>
            <person name="Delius H."/>
            <person name="DiPaolo T."/>
            <person name="Dubois E."/>
            <person name="Duesterhoeft A."/>
            <person name="Duncan M."/>
            <person name="Floeth M."/>
            <person name="Fortin N."/>
            <person name="Friesen J.D."/>
            <person name="Fritz C."/>
            <person name="Goffeau A."/>
            <person name="Hall J."/>
            <person name="Hebling U."/>
            <person name="Heumann K."/>
            <person name="Hilbert H."/>
            <person name="Hillier L.W."/>
            <person name="Hunicke-Smith S."/>
            <person name="Hyman R.W."/>
            <person name="Johnston M."/>
            <person name="Kalman S."/>
            <person name="Kleine K."/>
            <person name="Komp C."/>
            <person name="Kurdi O."/>
            <person name="Lashkari D."/>
            <person name="Lew H."/>
            <person name="Lin A."/>
            <person name="Lin D."/>
            <person name="Louis E.J."/>
            <person name="Marathe R."/>
            <person name="Messenguy F."/>
            <person name="Mewes H.-W."/>
            <person name="Mirtipati S."/>
            <person name="Moestl D."/>
            <person name="Mueller-Auer S."/>
            <person name="Namath A."/>
            <person name="Nentwich U."/>
            <person name="Oefner P."/>
            <person name="Pearson D."/>
            <person name="Petel F.X."/>
            <person name="Pohl T.M."/>
            <person name="Purnelle B."/>
            <person name="Rajandream M.A."/>
            <person name="Rechmann S."/>
            <person name="Rieger M."/>
            <person name="Riles L."/>
            <person name="Roberts D."/>
            <person name="Schaefer M."/>
            <person name="Scharfe M."/>
            <person name="Scherens B."/>
            <person name="Schramm S."/>
            <person name="Schroeder M."/>
            <person name="Sdicu A.-M."/>
            <person name="Tettelin H."/>
            <person name="Urrestarazu L.A."/>
            <person name="Ushinsky S."/>
            <person name="Vierendeels F."/>
            <person name="Vissers S."/>
            <person name="Voss H."/>
            <person name="Walsh S.V."/>
            <person name="Wambutt R."/>
            <person name="Wang Y."/>
            <person name="Wedler E."/>
            <person name="Wedler H."/>
            <person name="Winnett E."/>
            <person name="Zhong W.-W."/>
            <person name="Zollner A."/>
            <person name="Vo D.H."/>
            <person name="Hani J."/>
        </authorList>
    </citation>
    <scope>NUCLEOTIDE SEQUENCE [LARGE SCALE GENOMIC DNA]</scope>
    <source>
        <strain>ATCC 204508 / S288c</strain>
    </source>
</reference>
<reference key="2">
    <citation type="journal article" date="2014" name="G3 (Bethesda)">
        <title>The reference genome sequence of Saccharomyces cerevisiae: Then and now.</title>
        <authorList>
            <person name="Engel S.R."/>
            <person name="Dietrich F.S."/>
            <person name="Fisk D.G."/>
            <person name="Binkley G."/>
            <person name="Balakrishnan R."/>
            <person name="Costanzo M.C."/>
            <person name="Dwight S.S."/>
            <person name="Hitz B.C."/>
            <person name="Karra K."/>
            <person name="Nash R.S."/>
            <person name="Weng S."/>
            <person name="Wong E.D."/>
            <person name="Lloyd P."/>
            <person name="Skrzypek M.S."/>
            <person name="Miyasato S.R."/>
            <person name="Simison M."/>
            <person name="Cherry J.M."/>
        </authorList>
    </citation>
    <scope>GENOME REANNOTATION</scope>
    <source>
        <strain>ATCC 204508 / S288c</strain>
    </source>
</reference>
<reference key="3">
    <citation type="journal article" date="2002" name="Nat. Biotechnol.">
        <title>An integrated approach for finding overlooked genes in yeast.</title>
        <authorList>
            <person name="Kumar A."/>
            <person name="Harrison P.M."/>
            <person name="Cheung K.-H."/>
            <person name="Lan N."/>
            <person name="Echols N."/>
            <person name="Bertone P."/>
            <person name="Miller P."/>
            <person name="Gerstein M.B."/>
            <person name="Snyder M."/>
        </authorList>
    </citation>
    <scope>NUCLEOTIDE SEQUENCE [GENOMIC DNA]</scope>
</reference>
<accession>P0CX98</accession>
<accession>D3DMA0</accession>
<accession>Q8TFA4</accession>
<dbReference type="EMBL" id="Z73541">
    <property type="status" value="NOT_ANNOTATED_CDS"/>
    <property type="molecule type" value="Genomic_DNA"/>
</dbReference>
<dbReference type="EMBL" id="AF480021">
    <property type="protein sequence ID" value="AAL79334.1"/>
    <property type="molecule type" value="Genomic_DNA"/>
</dbReference>
<dbReference type="EMBL" id="BK006949">
    <property type="status" value="NOT_ANNOTATED_CDS"/>
    <property type="molecule type" value="Genomic_DNA"/>
</dbReference>
<dbReference type="RefSeq" id="NP_001073292.1">
    <property type="nucleotide sequence ID" value="NM_001184590.1"/>
</dbReference>
<dbReference type="FunCoup" id="P0CX98">
    <property type="interactions" value="3"/>
</dbReference>
<dbReference type="EnsemblFungi" id="YER190C-B_mRNA">
    <property type="protein sequence ID" value="YER190C-B"/>
    <property type="gene ID" value="YER190C-B"/>
</dbReference>
<dbReference type="EnsemblFungi" id="YGR296C-B_mRNA">
    <property type="protein sequence ID" value="YGR296C-B"/>
    <property type="gene ID" value="YGR296C-B"/>
</dbReference>
<dbReference type="EnsemblFungi" id="YPL283W-B_mRNA">
    <property type="protein sequence ID" value="YPL283W-B"/>
    <property type="gene ID" value="YPL283W-B"/>
</dbReference>
<dbReference type="EnsemblFungi" id="YPR204C-A_mRNA">
    <property type="protein sequence ID" value="YPR204C-A"/>
    <property type="gene ID" value="YPR204C-A"/>
</dbReference>
<dbReference type="KEGG" id="sce:YER190C-B"/>
<dbReference type="AGR" id="SGD:S000028727"/>
<dbReference type="SGD" id="S000028727">
    <property type="gene designation" value="YPR204C-A"/>
</dbReference>
<dbReference type="VEuPathDB" id="FungiDB:YER190C-B"/>
<dbReference type="GeneTree" id="ENSGT01130000278822"/>
<dbReference type="HOGENOM" id="CLU_139933_0_0_1"/>
<dbReference type="InParanoid" id="P0CX98"/>
<dbReference type="PRO" id="PR:P0CX98"/>
<dbReference type="Proteomes" id="UP000002311">
    <property type="component" value="Chromosome XVI"/>
</dbReference>
<dbReference type="RNAct" id="P0CX98">
    <property type="molecule type" value="protein"/>
</dbReference>
<dbReference type="GO" id="GO:0016020">
    <property type="term" value="C:membrane"/>
    <property type="evidence" value="ECO:0007669"/>
    <property type="project" value="UniProtKB-SubCell"/>
</dbReference>
<name>YP20A_YEAST</name>
<evidence type="ECO:0000255" key="1"/>
<evidence type="ECO:0000305" key="2"/>
<keyword id="KW-0472">Membrane</keyword>
<keyword id="KW-1185">Reference proteome</keyword>
<keyword id="KW-0812">Transmembrane</keyword>
<keyword id="KW-1133">Transmembrane helix</keyword>
<feature type="chain" id="PRO_0000410455" description="UPF0479 membrane protein YPR204C-A">
    <location>
        <begin position="1"/>
        <end position="160"/>
    </location>
</feature>
<feature type="transmembrane region" description="Helical" evidence="1">
    <location>
        <begin position="39"/>
        <end position="59"/>
    </location>
</feature>
<feature type="transmembrane region" description="Helical" evidence="1">
    <location>
        <begin position="136"/>
        <end position="156"/>
    </location>
</feature>
<organism>
    <name type="scientific">Saccharomyces cerevisiae (strain ATCC 204508 / S288c)</name>
    <name type="common">Baker's yeast</name>
    <dbReference type="NCBI Taxonomy" id="559292"/>
    <lineage>
        <taxon>Eukaryota</taxon>
        <taxon>Fungi</taxon>
        <taxon>Dikarya</taxon>
        <taxon>Ascomycota</taxon>
        <taxon>Saccharomycotina</taxon>
        <taxon>Saccharomycetes</taxon>
        <taxon>Saccharomycetales</taxon>
        <taxon>Saccharomycetaceae</taxon>
        <taxon>Saccharomyces</taxon>
    </lineage>
</organism>
<proteinExistence type="inferred from homology"/>
<gene>
    <name type="ordered locus">YPR204C-A</name>
</gene>
<comment type="subcellular location">
    <subcellularLocation>
        <location evidence="2">Membrane</location>
        <topology evidence="2">Multi-pass membrane protein</topology>
    </subcellularLocation>
</comment>
<comment type="similarity">
    <text evidence="2">Belongs to the UPF0479 family.</text>
</comment>
<sequence length="160" mass="18602">MMPAKLQLDVLRTLQSSARHGTQTLKNSNFLERFHKDRIVFCLPFFPALFFVPVQKVLQHLCLRFTQVAPYFIIQLFDLPSRHAENLAPLLASCRIQYTNCFSSSSNGQVPSIISLYLRVDLSPFYAKIFQISYRVPMIWLDVFQVFFVFLVISQHSLHS</sequence>
<protein>
    <recommendedName>
        <fullName>UPF0479 membrane protein YPR204C-A</fullName>
    </recommendedName>
</protein>